<protein>
    <recommendedName>
        <fullName>Uncharacterized protein aq_250</fullName>
    </recommendedName>
</protein>
<name>Y250_AQUAE</name>
<sequence>MNKELLEKCKQKLLEEKAKILERYLEKEETQQRLGEESKEPRDWEDIGQMTYTEELLDNLSNVEIATLREIDYALEKIEKGTYGICERCGEEIPEPRLCAIPWTRYCAKCAEEVERESGTYMPSYGVDMYNPENIQVEREDIGEA</sequence>
<gene>
    <name type="ordered locus">aq_250</name>
</gene>
<feature type="chain" id="PRO_0000187550" description="Uncharacterized protein aq_250">
    <location>
        <begin position="1"/>
        <end position="145"/>
    </location>
</feature>
<feature type="zinc finger region" description="dksA C4-type" evidence="1">
    <location>
        <begin position="86"/>
        <end position="110"/>
    </location>
</feature>
<proteinExistence type="predicted"/>
<dbReference type="EMBL" id="AE000657">
    <property type="protein sequence ID" value="AAC06572.1"/>
    <property type="molecule type" value="Genomic_DNA"/>
</dbReference>
<dbReference type="PIR" id="G70322">
    <property type="entry name" value="G70322"/>
</dbReference>
<dbReference type="RefSeq" id="NP_213171.1">
    <property type="nucleotide sequence ID" value="NC_000918.1"/>
</dbReference>
<dbReference type="RefSeq" id="WP_010880109.1">
    <property type="nucleotide sequence ID" value="NC_000918.1"/>
</dbReference>
<dbReference type="SMR" id="O66611"/>
<dbReference type="STRING" id="224324.aq_250"/>
<dbReference type="EnsemblBacteria" id="AAC06572">
    <property type="protein sequence ID" value="AAC06572"/>
    <property type="gene ID" value="aq_250"/>
</dbReference>
<dbReference type="KEGG" id="aae:aq_250"/>
<dbReference type="eggNOG" id="COG1734">
    <property type="taxonomic scope" value="Bacteria"/>
</dbReference>
<dbReference type="HOGENOM" id="CLU_043144_4_1_0"/>
<dbReference type="InParanoid" id="O66611"/>
<dbReference type="OrthoDB" id="9811543at2"/>
<dbReference type="Proteomes" id="UP000000798">
    <property type="component" value="Chromosome"/>
</dbReference>
<dbReference type="GO" id="GO:0008270">
    <property type="term" value="F:zinc ion binding"/>
    <property type="evidence" value="ECO:0007669"/>
    <property type="project" value="UniProtKB-KW"/>
</dbReference>
<dbReference type="Gene3D" id="1.20.120.910">
    <property type="entry name" value="DksA, coiled-coil domain"/>
    <property type="match status" value="1"/>
</dbReference>
<dbReference type="InterPro" id="IPR037187">
    <property type="entry name" value="DnaK_N"/>
</dbReference>
<dbReference type="InterPro" id="IPR000962">
    <property type="entry name" value="Znf_DskA_TraR"/>
</dbReference>
<dbReference type="InterPro" id="IPR020458">
    <property type="entry name" value="Znf_DskA_TraR_CS"/>
</dbReference>
<dbReference type="PANTHER" id="PTHR33823:SF4">
    <property type="entry name" value="GENERAL STRESS PROTEIN 16O"/>
    <property type="match status" value="1"/>
</dbReference>
<dbReference type="PANTHER" id="PTHR33823">
    <property type="entry name" value="RNA POLYMERASE-BINDING TRANSCRIPTION FACTOR DKSA-RELATED"/>
    <property type="match status" value="1"/>
</dbReference>
<dbReference type="Pfam" id="PF01258">
    <property type="entry name" value="zf-dskA_traR"/>
    <property type="match status" value="1"/>
</dbReference>
<dbReference type="SUPFAM" id="SSF109635">
    <property type="entry name" value="DnaK suppressor protein DksA, alpha-hairpin domain"/>
    <property type="match status" value="1"/>
</dbReference>
<dbReference type="SUPFAM" id="SSF57716">
    <property type="entry name" value="Glucocorticoid receptor-like (DNA-binding domain)"/>
    <property type="match status" value="1"/>
</dbReference>
<dbReference type="PROSITE" id="PS01102">
    <property type="entry name" value="ZF_DKSA_1"/>
    <property type="match status" value="1"/>
</dbReference>
<dbReference type="PROSITE" id="PS51128">
    <property type="entry name" value="ZF_DKSA_2"/>
    <property type="match status" value="1"/>
</dbReference>
<reference key="1">
    <citation type="journal article" date="1998" name="Nature">
        <title>The complete genome of the hyperthermophilic bacterium Aquifex aeolicus.</title>
        <authorList>
            <person name="Deckert G."/>
            <person name="Warren P.V."/>
            <person name="Gaasterland T."/>
            <person name="Young W.G."/>
            <person name="Lenox A.L."/>
            <person name="Graham D.E."/>
            <person name="Overbeek R."/>
            <person name="Snead M.A."/>
            <person name="Keller M."/>
            <person name="Aujay M."/>
            <person name="Huber R."/>
            <person name="Feldman R.A."/>
            <person name="Short J.M."/>
            <person name="Olsen G.J."/>
            <person name="Swanson R.V."/>
        </authorList>
    </citation>
    <scope>NUCLEOTIDE SEQUENCE [LARGE SCALE GENOMIC DNA]</scope>
    <source>
        <strain>VF5</strain>
    </source>
</reference>
<keyword id="KW-0479">Metal-binding</keyword>
<keyword id="KW-1185">Reference proteome</keyword>
<keyword id="KW-0862">Zinc</keyword>
<keyword id="KW-0863">Zinc-finger</keyword>
<evidence type="ECO:0000255" key="1">
    <source>
        <dbReference type="PROSITE-ProRule" id="PRU00510"/>
    </source>
</evidence>
<organism>
    <name type="scientific">Aquifex aeolicus (strain VF5)</name>
    <dbReference type="NCBI Taxonomy" id="224324"/>
    <lineage>
        <taxon>Bacteria</taxon>
        <taxon>Pseudomonadati</taxon>
        <taxon>Aquificota</taxon>
        <taxon>Aquificia</taxon>
        <taxon>Aquificales</taxon>
        <taxon>Aquificaceae</taxon>
        <taxon>Aquifex</taxon>
    </lineage>
</organism>
<accession>O66611</accession>